<gene>
    <name evidence="1" type="primary">mutH</name>
    <name type="ordered locus">PM1067</name>
</gene>
<keyword id="KW-0963">Cytoplasm</keyword>
<keyword id="KW-0227">DNA damage</keyword>
<keyword id="KW-0234">DNA repair</keyword>
<keyword id="KW-0255">Endonuclease</keyword>
<keyword id="KW-0378">Hydrolase</keyword>
<keyword id="KW-0540">Nuclease</keyword>
<keyword id="KW-1185">Reference proteome</keyword>
<evidence type="ECO:0000255" key="1">
    <source>
        <dbReference type="HAMAP-Rule" id="MF_00759"/>
    </source>
</evidence>
<comment type="function">
    <text evidence="1">Sequence-specific endonuclease that cleaves unmethylated GATC sequences. It is involved in DNA mismatch repair.</text>
</comment>
<comment type="subcellular location">
    <subcellularLocation>
        <location evidence="1">Cytoplasm</location>
    </subcellularLocation>
</comment>
<comment type="similarity">
    <text evidence="1">Belongs to the MutH family.</text>
</comment>
<proteinExistence type="inferred from homology"/>
<organism>
    <name type="scientific">Pasteurella multocida (strain Pm70)</name>
    <dbReference type="NCBI Taxonomy" id="272843"/>
    <lineage>
        <taxon>Bacteria</taxon>
        <taxon>Pseudomonadati</taxon>
        <taxon>Pseudomonadota</taxon>
        <taxon>Gammaproteobacteria</taxon>
        <taxon>Pasteurellales</taxon>
        <taxon>Pasteurellaceae</taxon>
        <taxon>Pasteurella</taxon>
    </lineage>
</organism>
<sequence>MTPQTEQELLQRAQAIAGLRFAELAQSLHMPVPPDLKRDKGWVGMLIETALGATAGSKAEQDFAHLGIELKTLPINAQGMPLETTFVSLAPLTQNVGVSWENSHVRHKLSKVLWILVEGERQIPLSERRVGQPILWQPSAQQELRLKRDWEELMEYISLGKLEQINATLGEVLQLRPKGANSKALTRGIGKHGEMIDTLPLGFYLRKTFTAEILQQFLLGTG</sequence>
<protein>
    <recommendedName>
        <fullName evidence="1">DNA mismatch repair protein MutH</fullName>
    </recommendedName>
    <alternativeName>
        <fullName evidence="1">Methyl-directed mismatch repair protein</fullName>
    </alternativeName>
</protein>
<dbReference type="EMBL" id="AE004439">
    <property type="protein sequence ID" value="AAK03151.1"/>
    <property type="molecule type" value="Genomic_DNA"/>
</dbReference>
<dbReference type="RefSeq" id="WP_005751795.1">
    <property type="nucleotide sequence ID" value="NC_002663.1"/>
</dbReference>
<dbReference type="SMR" id="Q9CLY2"/>
<dbReference type="STRING" id="272843.PM1067"/>
<dbReference type="EnsemblBacteria" id="AAK03151">
    <property type="protein sequence ID" value="AAK03151"/>
    <property type="gene ID" value="PM1067"/>
</dbReference>
<dbReference type="KEGG" id="pmu:PM1067"/>
<dbReference type="PATRIC" id="fig|272843.6.peg.1081"/>
<dbReference type="HOGENOM" id="CLU_086669_0_0_6"/>
<dbReference type="OrthoDB" id="5634909at2"/>
<dbReference type="Proteomes" id="UP000000809">
    <property type="component" value="Chromosome"/>
</dbReference>
<dbReference type="GO" id="GO:0005737">
    <property type="term" value="C:cytoplasm"/>
    <property type="evidence" value="ECO:0007669"/>
    <property type="project" value="UniProtKB-SubCell"/>
</dbReference>
<dbReference type="GO" id="GO:0003677">
    <property type="term" value="F:DNA binding"/>
    <property type="evidence" value="ECO:0007669"/>
    <property type="project" value="InterPro"/>
</dbReference>
<dbReference type="GO" id="GO:0004519">
    <property type="term" value="F:endonuclease activity"/>
    <property type="evidence" value="ECO:0007669"/>
    <property type="project" value="UniProtKB-UniRule"/>
</dbReference>
<dbReference type="GO" id="GO:0006304">
    <property type="term" value="P:DNA modification"/>
    <property type="evidence" value="ECO:0007669"/>
    <property type="project" value="InterPro"/>
</dbReference>
<dbReference type="GO" id="GO:0006298">
    <property type="term" value="P:mismatch repair"/>
    <property type="evidence" value="ECO:0007669"/>
    <property type="project" value="UniProtKB-UniRule"/>
</dbReference>
<dbReference type="CDD" id="cd00583">
    <property type="entry name" value="MutH-like"/>
    <property type="match status" value="1"/>
</dbReference>
<dbReference type="Gene3D" id="3.40.600.10">
    <property type="entry name" value="DNA mismatch repair MutH/Restriction endonuclease, type II"/>
    <property type="match status" value="1"/>
</dbReference>
<dbReference type="HAMAP" id="MF_00759">
    <property type="entry name" value="MutH"/>
    <property type="match status" value="1"/>
</dbReference>
<dbReference type="InterPro" id="IPR004230">
    <property type="entry name" value="DNA_mismatch_repair_MutH"/>
</dbReference>
<dbReference type="InterPro" id="IPR011337">
    <property type="entry name" value="DNA_rep_MutH/RE_typeII_Sau3AI"/>
</dbReference>
<dbReference type="InterPro" id="IPR037057">
    <property type="entry name" value="DNA_rep_MutH/T2_RE_sf"/>
</dbReference>
<dbReference type="InterPro" id="IPR011335">
    <property type="entry name" value="Restrct_endonuc-II-like"/>
</dbReference>
<dbReference type="NCBIfam" id="TIGR02248">
    <property type="entry name" value="mutH_TIGR"/>
    <property type="match status" value="1"/>
</dbReference>
<dbReference type="NCBIfam" id="NF003458">
    <property type="entry name" value="PRK05070.1"/>
    <property type="match status" value="1"/>
</dbReference>
<dbReference type="Pfam" id="PF02976">
    <property type="entry name" value="MutH"/>
    <property type="match status" value="1"/>
</dbReference>
<dbReference type="SMART" id="SM00927">
    <property type="entry name" value="MutH"/>
    <property type="match status" value="1"/>
</dbReference>
<dbReference type="SUPFAM" id="SSF52980">
    <property type="entry name" value="Restriction endonuclease-like"/>
    <property type="match status" value="1"/>
</dbReference>
<reference key="1">
    <citation type="journal article" date="2001" name="Proc. Natl. Acad. Sci. U.S.A.">
        <title>Complete genomic sequence of Pasteurella multocida Pm70.</title>
        <authorList>
            <person name="May B.J."/>
            <person name="Zhang Q."/>
            <person name="Li L.L."/>
            <person name="Paustian M.L."/>
            <person name="Whittam T.S."/>
            <person name="Kapur V."/>
        </authorList>
    </citation>
    <scope>NUCLEOTIDE SEQUENCE [LARGE SCALE GENOMIC DNA]</scope>
    <source>
        <strain>Pm70</strain>
    </source>
</reference>
<feature type="chain" id="PRO_0000198670" description="DNA mismatch repair protein MutH">
    <location>
        <begin position="1"/>
        <end position="222"/>
    </location>
</feature>
<name>MUTH_PASMU</name>
<accession>Q9CLY2</accession>